<proteinExistence type="inferred from homology"/>
<accession>P59953</accession>
<accession>A0A1R3XYA9</accession>
<accession>X2BH08</accession>
<comment type="function">
    <text evidence="1">Catalyzes the reversible interconversion of serine and glycine with tetrahydrofolate (THF) serving as the one-carbon carrier. This reaction serves as the major source of one-carbon groups required for the biosynthesis of purines, thymidylate, methionine, and other important biomolecules. Also exhibits THF-independent aldolase activity toward beta-hydroxyamino acids, producing glycine and aldehydes, via a retro-aldol mechanism.</text>
</comment>
<comment type="catalytic activity">
    <reaction evidence="1">
        <text>(6R)-5,10-methylene-5,6,7,8-tetrahydrofolate + glycine + H2O = (6S)-5,6,7,8-tetrahydrofolate + L-serine</text>
        <dbReference type="Rhea" id="RHEA:15481"/>
        <dbReference type="ChEBI" id="CHEBI:15377"/>
        <dbReference type="ChEBI" id="CHEBI:15636"/>
        <dbReference type="ChEBI" id="CHEBI:33384"/>
        <dbReference type="ChEBI" id="CHEBI:57305"/>
        <dbReference type="ChEBI" id="CHEBI:57453"/>
        <dbReference type="EC" id="2.1.2.1"/>
    </reaction>
</comment>
<comment type="cofactor">
    <cofactor evidence="1">
        <name>pyridoxal 5'-phosphate</name>
        <dbReference type="ChEBI" id="CHEBI:597326"/>
    </cofactor>
</comment>
<comment type="pathway">
    <text evidence="1">One-carbon metabolism; tetrahydrofolate interconversion.</text>
</comment>
<comment type="pathway">
    <text evidence="1">Amino-acid biosynthesis; glycine biosynthesis; glycine from L-serine: step 1/1.</text>
</comment>
<comment type="subunit">
    <text evidence="1">Homodimer.</text>
</comment>
<comment type="subcellular location">
    <subcellularLocation>
        <location evidence="1">Cytoplasm</location>
    </subcellularLocation>
</comment>
<comment type="similarity">
    <text evidence="1">Belongs to the SHMT family.</text>
</comment>
<sequence length="426" mass="45001">MSAPLAEVDPDIAELLAKELGRQRDTLEMIASENFAPRAVLQAQGSVLTNKYAEGLPGRRYYGGCEHVDVVENLARDRAKALFGAEFANVQPHSGAQANAAVLHALMSPGERLLGLDLANGGHLTHGMRLNFSGKLYENGFYGVDPATHLIDMDAVRATALEFRPKVIIAGWSAYPRVLDFAAFRSIADEVGAKLLVDMAHFAGLVAAGLHPSPVPHADVVSTTVHKTLGGGRSGLIVGKQQYAKAINSAVFPGQQGGPLMHVIAGKAVALKIAATPEFADRQRRTLSGARIIADRLMAPDVAKAGVSVVSGGTDVHLVLVDLRDSPLDGQAAEDLLHEVGITVNRNAVPNDPRPPMVTSGLRIGTPALATRGFGDTEFTEVADIIATALATGSSVDVSALKDRATRLARAFPLYDGLEEWSLVGR</sequence>
<feature type="chain" id="PRO_0000113606" description="Serine hydroxymethyltransferase 1">
    <location>
        <begin position="1"/>
        <end position="426"/>
    </location>
</feature>
<feature type="binding site" evidence="1">
    <location>
        <position position="118"/>
    </location>
    <ligand>
        <name>(6S)-5,6,7,8-tetrahydrofolate</name>
        <dbReference type="ChEBI" id="CHEBI:57453"/>
    </ligand>
</feature>
<feature type="binding site" evidence="1">
    <location>
        <begin position="122"/>
        <end position="124"/>
    </location>
    <ligand>
        <name>(6S)-5,6,7,8-tetrahydrofolate</name>
        <dbReference type="ChEBI" id="CHEBI:57453"/>
    </ligand>
</feature>
<feature type="site" description="Plays an important role in substrate specificity" evidence="1">
    <location>
        <position position="226"/>
    </location>
</feature>
<feature type="modified residue" description="N6-(pyridoxal phosphate)lysine" evidence="1">
    <location>
        <position position="227"/>
    </location>
</feature>
<reference key="1">
    <citation type="journal article" date="2003" name="Proc. Natl. Acad. Sci. U.S.A.">
        <title>The complete genome sequence of Mycobacterium bovis.</title>
        <authorList>
            <person name="Garnier T."/>
            <person name="Eiglmeier K."/>
            <person name="Camus J.-C."/>
            <person name="Medina N."/>
            <person name="Mansoor H."/>
            <person name="Pryor M."/>
            <person name="Duthoy S."/>
            <person name="Grondin S."/>
            <person name="Lacroix C."/>
            <person name="Monsempe C."/>
            <person name="Simon S."/>
            <person name="Harris B."/>
            <person name="Atkin R."/>
            <person name="Doggett J."/>
            <person name="Mayes R."/>
            <person name="Keating L."/>
            <person name="Wheeler P.R."/>
            <person name="Parkhill J."/>
            <person name="Barrell B.G."/>
            <person name="Cole S.T."/>
            <person name="Gordon S.V."/>
            <person name="Hewinson R.G."/>
        </authorList>
    </citation>
    <scope>NUCLEOTIDE SEQUENCE [LARGE SCALE GENOMIC DNA]</scope>
    <source>
        <strain>ATCC BAA-935 / AF2122/97</strain>
    </source>
</reference>
<reference key="2">
    <citation type="journal article" date="2017" name="Genome Announc.">
        <title>Updated reference genome sequence and annotation of Mycobacterium bovis AF2122/97.</title>
        <authorList>
            <person name="Malone K.M."/>
            <person name="Farrell D."/>
            <person name="Stuber T.P."/>
            <person name="Schubert O.T."/>
            <person name="Aebersold R."/>
            <person name="Robbe-Austerman S."/>
            <person name="Gordon S.V."/>
        </authorList>
    </citation>
    <scope>NUCLEOTIDE SEQUENCE [LARGE SCALE GENOMIC DNA]</scope>
    <scope>GENOME REANNOTATION</scope>
    <source>
        <strain>ATCC BAA-935 / AF2122/97</strain>
    </source>
</reference>
<evidence type="ECO:0000255" key="1">
    <source>
        <dbReference type="HAMAP-Rule" id="MF_00051"/>
    </source>
</evidence>
<keyword id="KW-0028">Amino-acid biosynthesis</keyword>
<keyword id="KW-0963">Cytoplasm</keyword>
<keyword id="KW-0554">One-carbon metabolism</keyword>
<keyword id="KW-0663">Pyridoxal phosphate</keyword>
<keyword id="KW-1185">Reference proteome</keyword>
<keyword id="KW-0808">Transferase</keyword>
<organism>
    <name type="scientific">Mycobacterium bovis (strain ATCC BAA-935 / AF2122/97)</name>
    <dbReference type="NCBI Taxonomy" id="233413"/>
    <lineage>
        <taxon>Bacteria</taxon>
        <taxon>Bacillati</taxon>
        <taxon>Actinomycetota</taxon>
        <taxon>Actinomycetes</taxon>
        <taxon>Mycobacteriales</taxon>
        <taxon>Mycobacteriaceae</taxon>
        <taxon>Mycobacterium</taxon>
        <taxon>Mycobacterium tuberculosis complex</taxon>
    </lineage>
</organism>
<protein>
    <recommendedName>
        <fullName evidence="1">Serine hydroxymethyltransferase 1</fullName>
        <shortName evidence="1">SHMT 1</shortName>
        <shortName evidence="1">Serine methylase 1</shortName>
        <ecNumber evidence="1">2.1.2.1</ecNumber>
    </recommendedName>
</protein>
<dbReference type="EC" id="2.1.2.1" evidence="1"/>
<dbReference type="EMBL" id="LT708304">
    <property type="protein sequence ID" value="SIT99723.1"/>
    <property type="molecule type" value="Genomic_DNA"/>
</dbReference>
<dbReference type="RefSeq" id="NP_854779.1">
    <property type="nucleotide sequence ID" value="NC_002945.3"/>
</dbReference>
<dbReference type="SMR" id="P59953"/>
<dbReference type="KEGG" id="mbo:BQ2027_MB1123"/>
<dbReference type="PATRIC" id="fig|233413.5.peg.1229"/>
<dbReference type="UniPathway" id="UPA00193"/>
<dbReference type="UniPathway" id="UPA00288">
    <property type="reaction ID" value="UER01023"/>
</dbReference>
<dbReference type="Proteomes" id="UP000001419">
    <property type="component" value="Chromosome"/>
</dbReference>
<dbReference type="GO" id="GO:0005829">
    <property type="term" value="C:cytosol"/>
    <property type="evidence" value="ECO:0007669"/>
    <property type="project" value="TreeGrafter"/>
</dbReference>
<dbReference type="GO" id="GO:0004372">
    <property type="term" value="F:glycine hydroxymethyltransferase activity"/>
    <property type="evidence" value="ECO:0007669"/>
    <property type="project" value="UniProtKB-UniRule"/>
</dbReference>
<dbReference type="GO" id="GO:0030170">
    <property type="term" value="F:pyridoxal phosphate binding"/>
    <property type="evidence" value="ECO:0007669"/>
    <property type="project" value="UniProtKB-UniRule"/>
</dbReference>
<dbReference type="GO" id="GO:0019264">
    <property type="term" value="P:glycine biosynthetic process from serine"/>
    <property type="evidence" value="ECO:0007669"/>
    <property type="project" value="UniProtKB-UniRule"/>
</dbReference>
<dbReference type="GO" id="GO:0035999">
    <property type="term" value="P:tetrahydrofolate interconversion"/>
    <property type="evidence" value="ECO:0007669"/>
    <property type="project" value="UniProtKB-UniRule"/>
</dbReference>
<dbReference type="CDD" id="cd00378">
    <property type="entry name" value="SHMT"/>
    <property type="match status" value="1"/>
</dbReference>
<dbReference type="FunFam" id="3.40.640.10:FF:000001">
    <property type="entry name" value="Serine hydroxymethyltransferase"/>
    <property type="match status" value="1"/>
</dbReference>
<dbReference type="Gene3D" id="3.90.1150.10">
    <property type="entry name" value="Aspartate Aminotransferase, domain 1"/>
    <property type="match status" value="1"/>
</dbReference>
<dbReference type="Gene3D" id="3.40.640.10">
    <property type="entry name" value="Type I PLP-dependent aspartate aminotransferase-like (Major domain)"/>
    <property type="match status" value="1"/>
</dbReference>
<dbReference type="HAMAP" id="MF_00051">
    <property type="entry name" value="SHMT"/>
    <property type="match status" value="1"/>
</dbReference>
<dbReference type="InterPro" id="IPR015424">
    <property type="entry name" value="PyrdxlP-dep_Trfase"/>
</dbReference>
<dbReference type="InterPro" id="IPR015421">
    <property type="entry name" value="PyrdxlP-dep_Trfase_major"/>
</dbReference>
<dbReference type="InterPro" id="IPR015422">
    <property type="entry name" value="PyrdxlP-dep_Trfase_small"/>
</dbReference>
<dbReference type="InterPro" id="IPR001085">
    <property type="entry name" value="Ser_HO-MeTrfase"/>
</dbReference>
<dbReference type="InterPro" id="IPR049943">
    <property type="entry name" value="Ser_HO-MeTrfase-like"/>
</dbReference>
<dbReference type="InterPro" id="IPR019798">
    <property type="entry name" value="Ser_HO-MeTrfase_PLP_BS"/>
</dbReference>
<dbReference type="InterPro" id="IPR039429">
    <property type="entry name" value="SHMT-like_dom"/>
</dbReference>
<dbReference type="NCBIfam" id="NF000586">
    <property type="entry name" value="PRK00011.1"/>
    <property type="match status" value="1"/>
</dbReference>
<dbReference type="PANTHER" id="PTHR11680">
    <property type="entry name" value="SERINE HYDROXYMETHYLTRANSFERASE"/>
    <property type="match status" value="1"/>
</dbReference>
<dbReference type="PANTHER" id="PTHR11680:SF35">
    <property type="entry name" value="SERINE HYDROXYMETHYLTRANSFERASE 1"/>
    <property type="match status" value="1"/>
</dbReference>
<dbReference type="Pfam" id="PF00464">
    <property type="entry name" value="SHMT"/>
    <property type="match status" value="1"/>
</dbReference>
<dbReference type="PIRSF" id="PIRSF000412">
    <property type="entry name" value="SHMT"/>
    <property type="match status" value="1"/>
</dbReference>
<dbReference type="SUPFAM" id="SSF53383">
    <property type="entry name" value="PLP-dependent transferases"/>
    <property type="match status" value="1"/>
</dbReference>
<dbReference type="PROSITE" id="PS00096">
    <property type="entry name" value="SHMT"/>
    <property type="match status" value="1"/>
</dbReference>
<gene>
    <name evidence="1" type="primary">glyA1</name>
    <name type="ordered locus">BQ2027_MB1123</name>
</gene>
<name>GLYA1_MYCBO</name>